<proteinExistence type="inferred from homology"/>
<name>ATPG_LISMH</name>
<keyword id="KW-0066">ATP synthesis</keyword>
<keyword id="KW-1003">Cell membrane</keyword>
<keyword id="KW-0139">CF(1)</keyword>
<keyword id="KW-0375">Hydrogen ion transport</keyword>
<keyword id="KW-0406">Ion transport</keyword>
<keyword id="KW-0472">Membrane</keyword>
<keyword id="KW-0813">Transport</keyword>
<dbReference type="EMBL" id="CP001175">
    <property type="protein sequence ID" value="ACK38431.1"/>
    <property type="molecule type" value="Genomic_DNA"/>
</dbReference>
<dbReference type="RefSeq" id="WP_003723463.1">
    <property type="nucleotide sequence ID" value="NC_011660.1"/>
</dbReference>
<dbReference type="SMR" id="B8DBI0"/>
<dbReference type="KEGG" id="lmh:LMHCC_0068"/>
<dbReference type="HOGENOM" id="CLU_050669_0_1_9"/>
<dbReference type="GO" id="GO:0005886">
    <property type="term" value="C:plasma membrane"/>
    <property type="evidence" value="ECO:0007669"/>
    <property type="project" value="UniProtKB-SubCell"/>
</dbReference>
<dbReference type="GO" id="GO:0045259">
    <property type="term" value="C:proton-transporting ATP synthase complex"/>
    <property type="evidence" value="ECO:0007669"/>
    <property type="project" value="UniProtKB-KW"/>
</dbReference>
<dbReference type="GO" id="GO:0005524">
    <property type="term" value="F:ATP binding"/>
    <property type="evidence" value="ECO:0007669"/>
    <property type="project" value="UniProtKB-UniRule"/>
</dbReference>
<dbReference type="GO" id="GO:0046933">
    <property type="term" value="F:proton-transporting ATP synthase activity, rotational mechanism"/>
    <property type="evidence" value="ECO:0007669"/>
    <property type="project" value="UniProtKB-UniRule"/>
</dbReference>
<dbReference type="GO" id="GO:0042777">
    <property type="term" value="P:proton motive force-driven plasma membrane ATP synthesis"/>
    <property type="evidence" value="ECO:0007669"/>
    <property type="project" value="UniProtKB-UniRule"/>
</dbReference>
<dbReference type="CDD" id="cd12151">
    <property type="entry name" value="F1-ATPase_gamma"/>
    <property type="match status" value="1"/>
</dbReference>
<dbReference type="FunFam" id="1.10.287.80:FF:000010">
    <property type="entry name" value="ATP synthase gamma chain"/>
    <property type="match status" value="1"/>
</dbReference>
<dbReference type="FunFam" id="3.40.1380.10:FF:000002">
    <property type="entry name" value="ATP synthase gamma chain"/>
    <property type="match status" value="1"/>
</dbReference>
<dbReference type="Gene3D" id="3.40.1380.10">
    <property type="match status" value="1"/>
</dbReference>
<dbReference type="Gene3D" id="1.10.287.80">
    <property type="entry name" value="ATP synthase, gamma subunit, helix hairpin domain"/>
    <property type="match status" value="1"/>
</dbReference>
<dbReference type="HAMAP" id="MF_00815">
    <property type="entry name" value="ATP_synth_gamma_bact"/>
    <property type="match status" value="1"/>
</dbReference>
<dbReference type="InterPro" id="IPR035968">
    <property type="entry name" value="ATP_synth_F1_ATPase_gsu"/>
</dbReference>
<dbReference type="InterPro" id="IPR000131">
    <property type="entry name" value="ATP_synth_F1_gsu"/>
</dbReference>
<dbReference type="InterPro" id="IPR023632">
    <property type="entry name" value="ATP_synth_F1_gsu_CS"/>
</dbReference>
<dbReference type="NCBIfam" id="TIGR01146">
    <property type="entry name" value="ATPsyn_F1gamma"/>
    <property type="match status" value="1"/>
</dbReference>
<dbReference type="NCBIfam" id="NF004147">
    <property type="entry name" value="PRK05621.2-1"/>
    <property type="match status" value="1"/>
</dbReference>
<dbReference type="PANTHER" id="PTHR11693">
    <property type="entry name" value="ATP SYNTHASE GAMMA CHAIN"/>
    <property type="match status" value="1"/>
</dbReference>
<dbReference type="PANTHER" id="PTHR11693:SF22">
    <property type="entry name" value="ATP SYNTHASE SUBUNIT GAMMA, MITOCHONDRIAL"/>
    <property type="match status" value="1"/>
</dbReference>
<dbReference type="Pfam" id="PF00231">
    <property type="entry name" value="ATP-synt"/>
    <property type="match status" value="1"/>
</dbReference>
<dbReference type="PRINTS" id="PR00126">
    <property type="entry name" value="ATPASEGAMMA"/>
</dbReference>
<dbReference type="SUPFAM" id="SSF52943">
    <property type="entry name" value="ATP synthase (F1-ATPase), gamma subunit"/>
    <property type="match status" value="1"/>
</dbReference>
<dbReference type="PROSITE" id="PS00153">
    <property type="entry name" value="ATPASE_GAMMA"/>
    <property type="match status" value="1"/>
</dbReference>
<gene>
    <name evidence="1" type="primary">atpG</name>
    <name type="ordered locus">LMHCC_0068</name>
</gene>
<accession>B8DBI0</accession>
<evidence type="ECO:0000255" key="1">
    <source>
        <dbReference type="HAMAP-Rule" id="MF_00815"/>
    </source>
</evidence>
<comment type="function">
    <text evidence="1">Produces ATP from ADP in the presence of a proton gradient across the membrane. The gamma chain is believed to be important in regulating ATPase activity and the flow of protons through the CF(0) complex.</text>
</comment>
<comment type="subunit">
    <text evidence="1">F-type ATPases have 2 components, CF(1) - the catalytic core - and CF(0) - the membrane proton channel. CF(1) has five subunits: alpha(3), beta(3), gamma(1), delta(1), epsilon(1). CF(0) has three main subunits: a, b and c.</text>
</comment>
<comment type="subcellular location">
    <subcellularLocation>
        <location evidence="1">Cell membrane</location>
        <topology evidence="1">Peripheral membrane protein</topology>
    </subcellularLocation>
</comment>
<comment type="similarity">
    <text evidence="1">Belongs to the ATPase gamma chain family.</text>
</comment>
<sequence length="290" mass="32254">MASLIDIKQRITSTRKTSQITKAMQMVSAAKLGRAESNARSYEPYVSKIKDVVTHVASTGNSSDHPMLVSRPVHRTGYIVLTSDTGLAGSYNSSVIKEVFQEINKKHTSSDEYAIITVGRSARDFFKARQMNVVLEVQGITDHPIFAEIKDIASNTVQMFEDGVYDEVFIYYNHHINSISSELRKEQLLPLTEFHEKGKETDVDLTTYEFEPSEQEILEVLLPQYVESLIFGALLDAKAAEHAARMTAMRSATDNASDLISDLSLQYNRARQAAITQEITEIVGGAAALE</sequence>
<feature type="chain" id="PRO_1000148624" description="ATP synthase gamma chain">
    <location>
        <begin position="1"/>
        <end position="290"/>
    </location>
</feature>
<reference key="1">
    <citation type="journal article" date="2011" name="J. Bacteriol.">
        <title>Genome sequence of lineage III Listeria monocytogenes strain HCC23.</title>
        <authorList>
            <person name="Steele C.L."/>
            <person name="Donaldson J.R."/>
            <person name="Paul D."/>
            <person name="Banes M.M."/>
            <person name="Arick T."/>
            <person name="Bridges S.M."/>
            <person name="Lawrence M.L."/>
        </authorList>
    </citation>
    <scope>NUCLEOTIDE SEQUENCE [LARGE SCALE GENOMIC DNA]</scope>
    <source>
        <strain>HCC23</strain>
    </source>
</reference>
<organism>
    <name type="scientific">Listeria monocytogenes serotype 4a (strain HCC23)</name>
    <dbReference type="NCBI Taxonomy" id="552536"/>
    <lineage>
        <taxon>Bacteria</taxon>
        <taxon>Bacillati</taxon>
        <taxon>Bacillota</taxon>
        <taxon>Bacilli</taxon>
        <taxon>Bacillales</taxon>
        <taxon>Listeriaceae</taxon>
        <taxon>Listeria</taxon>
    </lineage>
</organism>
<protein>
    <recommendedName>
        <fullName evidence="1">ATP synthase gamma chain</fullName>
    </recommendedName>
    <alternativeName>
        <fullName evidence="1">ATP synthase F1 sector gamma subunit</fullName>
    </alternativeName>
    <alternativeName>
        <fullName evidence="1">F-ATPase gamma subunit</fullName>
    </alternativeName>
</protein>